<organism>
    <name type="scientific">Macaca mulatta</name>
    <name type="common">Rhesus macaque</name>
    <dbReference type="NCBI Taxonomy" id="9544"/>
    <lineage>
        <taxon>Eukaryota</taxon>
        <taxon>Metazoa</taxon>
        <taxon>Chordata</taxon>
        <taxon>Craniata</taxon>
        <taxon>Vertebrata</taxon>
        <taxon>Euteleostomi</taxon>
        <taxon>Mammalia</taxon>
        <taxon>Eutheria</taxon>
        <taxon>Euarchontoglires</taxon>
        <taxon>Primates</taxon>
        <taxon>Haplorrhini</taxon>
        <taxon>Catarrhini</taxon>
        <taxon>Cercopithecidae</taxon>
        <taxon>Cercopithecinae</taxon>
        <taxon>Macaca</taxon>
    </lineage>
</organism>
<proteinExistence type="inferred from homology"/>
<dbReference type="EMBL" id="DQ976857">
    <property type="protein sequence ID" value="ABM55128.1"/>
    <property type="molecule type" value="Genomic_DNA"/>
</dbReference>
<dbReference type="RefSeq" id="XP_015007367.1">
    <property type="nucleotide sequence ID" value="XM_015151881.2"/>
</dbReference>
<dbReference type="SMR" id="A2D635"/>
<dbReference type="FunCoup" id="A2D635">
    <property type="interactions" value="1024"/>
</dbReference>
<dbReference type="STRING" id="9544.ENSMMUP00000001242"/>
<dbReference type="PaxDb" id="9544-ENSMMUP00000001242"/>
<dbReference type="Ensembl" id="ENSMMUT00000001322.4">
    <property type="protein sequence ID" value="ENSMMUP00000001242.3"/>
    <property type="gene ID" value="ENSMMUG00000000925.4"/>
</dbReference>
<dbReference type="GeneID" id="702321"/>
<dbReference type="KEGG" id="mcc:702321"/>
<dbReference type="CTD" id="3226"/>
<dbReference type="VEuPathDB" id="HostDB:ENSMMUG00000000925"/>
<dbReference type="VGNC" id="VGNC:73506">
    <property type="gene designation" value="HOXC10"/>
</dbReference>
<dbReference type="eggNOG" id="KOG0487">
    <property type="taxonomic scope" value="Eukaryota"/>
</dbReference>
<dbReference type="GeneTree" id="ENSGT00940000160855"/>
<dbReference type="InParanoid" id="A2D635"/>
<dbReference type="OMA" id="MYMQSGN"/>
<dbReference type="OrthoDB" id="6159439at2759"/>
<dbReference type="Proteomes" id="UP000006718">
    <property type="component" value="Chromosome 11"/>
</dbReference>
<dbReference type="Bgee" id="ENSMMUG00000000925">
    <property type="expression patterns" value="Expressed in hindlimb stylopod muscle and 6 other cell types or tissues"/>
</dbReference>
<dbReference type="GO" id="GO:0016604">
    <property type="term" value="C:nuclear body"/>
    <property type="evidence" value="ECO:0007669"/>
    <property type="project" value="Ensembl"/>
</dbReference>
<dbReference type="GO" id="GO:0005634">
    <property type="term" value="C:nucleus"/>
    <property type="evidence" value="ECO:0000318"/>
    <property type="project" value="GO_Central"/>
</dbReference>
<dbReference type="GO" id="GO:0001228">
    <property type="term" value="F:DNA-binding transcription activator activity, RNA polymerase II-specific"/>
    <property type="evidence" value="ECO:0007669"/>
    <property type="project" value="Ensembl"/>
</dbReference>
<dbReference type="GO" id="GO:0000981">
    <property type="term" value="F:DNA-binding transcription factor activity, RNA polymerase II-specific"/>
    <property type="evidence" value="ECO:0000318"/>
    <property type="project" value="GO_Central"/>
</dbReference>
<dbReference type="GO" id="GO:0000978">
    <property type="term" value="F:RNA polymerase II cis-regulatory region sequence-specific DNA binding"/>
    <property type="evidence" value="ECO:0000318"/>
    <property type="project" value="GO_Central"/>
</dbReference>
<dbReference type="GO" id="GO:0009952">
    <property type="term" value="P:anterior/posterior pattern specification"/>
    <property type="evidence" value="ECO:0007669"/>
    <property type="project" value="Ensembl"/>
</dbReference>
<dbReference type="GO" id="GO:0030326">
    <property type="term" value="P:embryonic limb morphogenesis"/>
    <property type="evidence" value="ECO:0007669"/>
    <property type="project" value="Ensembl"/>
</dbReference>
<dbReference type="GO" id="GO:0120163">
    <property type="term" value="P:negative regulation of cold-induced thermogenesis"/>
    <property type="evidence" value="ECO:0007669"/>
    <property type="project" value="Ensembl"/>
</dbReference>
<dbReference type="GO" id="GO:0050905">
    <property type="term" value="P:neuromuscular process"/>
    <property type="evidence" value="ECO:0007669"/>
    <property type="project" value="Ensembl"/>
</dbReference>
<dbReference type="GO" id="GO:0009954">
    <property type="term" value="P:proximal/distal pattern formation"/>
    <property type="evidence" value="ECO:0007669"/>
    <property type="project" value="Ensembl"/>
</dbReference>
<dbReference type="GO" id="GO:0006357">
    <property type="term" value="P:regulation of transcription by RNA polymerase II"/>
    <property type="evidence" value="ECO:0000318"/>
    <property type="project" value="GO_Central"/>
</dbReference>
<dbReference type="GO" id="GO:0001501">
    <property type="term" value="P:skeletal system development"/>
    <property type="evidence" value="ECO:0007669"/>
    <property type="project" value="Ensembl"/>
</dbReference>
<dbReference type="GO" id="GO:0021520">
    <property type="term" value="P:spinal cord motor neuron cell fate specification"/>
    <property type="evidence" value="ECO:0007669"/>
    <property type="project" value="Ensembl"/>
</dbReference>
<dbReference type="CDD" id="cd00086">
    <property type="entry name" value="homeodomain"/>
    <property type="match status" value="1"/>
</dbReference>
<dbReference type="FunFam" id="1.10.10.60:FF:000018">
    <property type="entry name" value="Homeobox A10"/>
    <property type="match status" value="1"/>
</dbReference>
<dbReference type="Gene3D" id="1.10.10.60">
    <property type="entry name" value="Homeodomain-like"/>
    <property type="match status" value="1"/>
</dbReference>
<dbReference type="InterPro" id="IPR001356">
    <property type="entry name" value="HD"/>
</dbReference>
<dbReference type="InterPro" id="IPR020479">
    <property type="entry name" value="HD_metazoa"/>
</dbReference>
<dbReference type="InterPro" id="IPR017970">
    <property type="entry name" value="Homeobox_CS"/>
</dbReference>
<dbReference type="InterPro" id="IPR009057">
    <property type="entry name" value="Homeodomain-like_sf"/>
</dbReference>
<dbReference type="InterPro" id="IPR046333">
    <property type="entry name" value="HXA10/ABDB-like"/>
</dbReference>
<dbReference type="PANTHER" id="PTHR45874">
    <property type="entry name" value="HOMEOBOX PROTEIN ABDOMINAL-B"/>
    <property type="match status" value="1"/>
</dbReference>
<dbReference type="PANTHER" id="PTHR45874:SF2">
    <property type="entry name" value="HOMEOBOX PROTEIN HOX-C10"/>
    <property type="match status" value="1"/>
</dbReference>
<dbReference type="Pfam" id="PF00046">
    <property type="entry name" value="Homeodomain"/>
    <property type="match status" value="1"/>
</dbReference>
<dbReference type="PRINTS" id="PR00024">
    <property type="entry name" value="HOMEOBOX"/>
</dbReference>
<dbReference type="SMART" id="SM00389">
    <property type="entry name" value="HOX"/>
    <property type="match status" value="1"/>
</dbReference>
<dbReference type="SUPFAM" id="SSF46689">
    <property type="entry name" value="Homeodomain-like"/>
    <property type="match status" value="1"/>
</dbReference>
<dbReference type="PROSITE" id="PS00027">
    <property type="entry name" value="HOMEOBOX_1"/>
    <property type="match status" value="1"/>
</dbReference>
<dbReference type="PROSITE" id="PS50071">
    <property type="entry name" value="HOMEOBOX_2"/>
    <property type="match status" value="1"/>
</dbReference>
<sequence length="342" mass="38119">MTCPRNVTPNSYAEPLAAPGGGERYSRSAGMYMQSGSDFNCGVMRGCGLAPSLSKRDEGGSPSLTLNTYPSYLSQLDSWGDPKAAYRLEQPVGRPLSSCSYPPSVKEENVCCMYSAEKRAKSGPEAALYSHPLPESCLGEHEVPVPSYYRASPSYSALDKTPHCSGANDFEAPFEQRASLNPRAEHLESPQLGGKVSFPETPKSDNQTPSPSEIKTEQSLAGPKGSPSESEKERAKTADCSPDTSDNEAKEEIKAENTTGNWLTAKSGRKKRCPYTKHQTLELEKEFLFNMYLTRERRLEISKTINLTDRQVKIWFQNRRMKLKKMNRENRIRELTSNFNFT</sequence>
<gene>
    <name type="primary">HOXC10</name>
</gene>
<comment type="function">
    <text evidence="1">Sequence-specific transcription factor which is part of a developmental regulatory system that provides cells with specific positional identities on the anterior-posterior axis.</text>
</comment>
<comment type="subcellular location">
    <subcellularLocation>
        <location evidence="3">Nucleus</location>
    </subcellularLocation>
</comment>
<comment type="similarity">
    <text evidence="5">Belongs to the Abd-B homeobox family.</text>
</comment>
<name>HXC10_MACMU</name>
<reference key="1">
    <citation type="submission" date="2006-08" db="EMBL/GenBank/DDBJ databases">
        <title>Positive selection in transcription factor genes on the human lineage.</title>
        <authorList>
            <person name="Nickel G.C."/>
            <person name="Tefft D.L."/>
            <person name="Trevarthen K."/>
            <person name="Funt J."/>
            <person name="Adams M.D."/>
        </authorList>
    </citation>
    <scope>NUCLEOTIDE SEQUENCE [GENOMIC DNA]</scope>
</reference>
<protein>
    <recommendedName>
        <fullName>Homeobox protein Hox-C10</fullName>
    </recommendedName>
</protein>
<accession>A2D635</accession>
<feature type="chain" id="PRO_0000285429" description="Homeobox protein Hox-C10">
    <location>
        <begin position="1"/>
        <end position="342"/>
    </location>
</feature>
<feature type="DNA-binding region" description="Homeobox" evidence="3">
    <location>
        <begin position="268"/>
        <end position="327"/>
    </location>
</feature>
<feature type="region of interest" description="Disordered" evidence="4">
    <location>
        <begin position="1"/>
        <end position="29"/>
    </location>
</feature>
<feature type="region of interest" description="Disordered" evidence="4">
    <location>
        <begin position="187"/>
        <end position="271"/>
    </location>
</feature>
<feature type="compositionally biased region" description="Polar residues" evidence="4">
    <location>
        <begin position="1"/>
        <end position="11"/>
    </location>
</feature>
<feature type="compositionally biased region" description="Polar residues" evidence="4">
    <location>
        <begin position="204"/>
        <end position="219"/>
    </location>
</feature>
<feature type="modified residue" description="Phosphothreonine" evidence="2">
    <location>
        <position position="8"/>
    </location>
</feature>
<feature type="modified residue" description="Phosphoserine" evidence="2">
    <location>
        <position position="189"/>
    </location>
</feature>
<feature type="cross-link" description="Glycyl lysine isopeptide (Lys-Gly) (interchain with G-Cter in SUMO2)" evidence="2">
    <location>
        <position position="106"/>
    </location>
</feature>
<feature type="cross-link" description="Glycyl lysine isopeptide (Lys-Gly) (interchain with G-Cter in SUMO2)" evidence="2">
    <location>
        <position position="195"/>
    </location>
</feature>
<feature type="cross-link" description="Glycyl lysine isopeptide (Lys-Gly) (interchain with G-Cter in SUMO2)" evidence="2">
    <location>
        <position position="254"/>
    </location>
</feature>
<keyword id="KW-0217">Developmental protein</keyword>
<keyword id="KW-0238">DNA-binding</keyword>
<keyword id="KW-0371">Homeobox</keyword>
<keyword id="KW-1017">Isopeptide bond</keyword>
<keyword id="KW-0539">Nucleus</keyword>
<keyword id="KW-0597">Phosphoprotein</keyword>
<keyword id="KW-1185">Reference proteome</keyword>
<keyword id="KW-0804">Transcription</keyword>
<keyword id="KW-0805">Transcription regulation</keyword>
<keyword id="KW-0832">Ubl conjugation</keyword>
<evidence type="ECO:0000250" key="1"/>
<evidence type="ECO:0000250" key="2">
    <source>
        <dbReference type="UniProtKB" id="Q9NYD6"/>
    </source>
</evidence>
<evidence type="ECO:0000255" key="3">
    <source>
        <dbReference type="PROSITE-ProRule" id="PRU00108"/>
    </source>
</evidence>
<evidence type="ECO:0000256" key="4">
    <source>
        <dbReference type="SAM" id="MobiDB-lite"/>
    </source>
</evidence>
<evidence type="ECO:0000305" key="5"/>